<dbReference type="PDB" id="1DFY">
    <property type="method" value="NMR"/>
    <property type="chains" value="A=55-62"/>
</dbReference>
<dbReference type="PDB" id="1DFZ">
    <property type="method" value="NMR"/>
    <property type="chains" value="A=55-62"/>
</dbReference>
<dbReference type="PDBsum" id="1DFY"/>
<dbReference type="PDBsum" id="1DFZ"/>
<dbReference type="SMR" id="P58787"/>
<dbReference type="ConoServer" id="1311">
    <property type="toxin name" value="Contryphan-Sm precursor"/>
</dbReference>
<dbReference type="EvolutionaryTrace" id="P58787"/>
<dbReference type="GO" id="GO:0005576">
    <property type="term" value="C:extracellular region"/>
    <property type="evidence" value="ECO:0007669"/>
    <property type="project" value="UniProtKB-SubCell"/>
</dbReference>
<dbReference type="GO" id="GO:0008200">
    <property type="term" value="F:ion channel inhibitor activity"/>
    <property type="evidence" value="ECO:0007669"/>
    <property type="project" value="InterPro"/>
</dbReference>
<dbReference type="GO" id="GO:0090729">
    <property type="term" value="F:toxin activity"/>
    <property type="evidence" value="ECO:0007669"/>
    <property type="project" value="UniProtKB-KW"/>
</dbReference>
<dbReference type="InterPro" id="IPR004214">
    <property type="entry name" value="Conotoxin"/>
</dbReference>
<dbReference type="InterPro" id="IPR011062">
    <property type="entry name" value="Contryphan_CS"/>
</dbReference>
<dbReference type="Pfam" id="PF02950">
    <property type="entry name" value="Conotoxin"/>
    <property type="match status" value="1"/>
</dbReference>
<dbReference type="PROSITE" id="PS60027">
    <property type="entry name" value="CONTRYPHAN"/>
    <property type="match status" value="1"/>
</dbReference>
<accession>P58787</accession>
<comment type="function">
    <text evidence="1 2 3 4">Its target is unknown, but this toxin may modulate voltage-activated calcium channels (Cav) or calcium-dependent potassium channels (KCa).</text>
</comment>
<comment type="subcellular location">
    <subcellularLocation>
        <location evidence="8">Secreted</location>
    </subcellularLocation>
</comment>
<comment type="tissue specificity">
    <text evidence="12">Expressed by the venom duct.</text>
</comment>
<comment type="domain">
    <text evidence="11">The cysteine framework is C-C.</text>
</comment>
<comment type="mass spectrometry" mass="989.3" method="Electrospray" evidence="8"/>
<comment type="miscellaneous">
    <text evidence="7">Exists in two forms, due to cis-trans isomerization at 56-Cys-hydroxyPro-57. The cis conformation is the major form.</text>
</comment>
<comment type="similarity">
    <text evidence="11">Belongs to the O2 superfamily. Contryphan family.</text>
</comment>
<keyword id="KW-0002">3D-structure</keyword>
<keyword id="KW-0027">Amidation</keyword>
<keyword id="KW-0208">D-amino acid</keyword>
<keyword id="KW-0903">Direct protein sequencing</keyword>
<keyword id="KW-1015">Disulfide bond</keyword>
<keyword id="KW-0379">Hydroxylation</keyword>
<keyword id="KW-0872">Ion channel impairing toxin</keyword>
<keyword id="KW-0528">Neurotoxin</keyword>
<keyword id="KW-0964">Secreted</keyword>
<keyword id="KW-0732">Signal</keyword>
<keyword id="KW-0800">Toxin</keyword>
<feature type="signal peptide" evidence="5">
    <location>
        <begin position="1"/>
        <end position="23"/>
    </location>
</feature>
<feature type="propeptide" id="PRO_0000035073" evidence="8">
    <location>
        <begin position="24"/>
        <end position="54"/>
    </location>
</feature>
<feature type="peptide" id="PRO_0000035074" description="Contryphan-Sm" evidence="8">
    <location>
        <begin position="55"/>
        <end position="62"/>
    </location>
</feature>
<feature type="region of interest" description="Disordered" evidence="6">
    <location>
        <begin position="23"/>
        <end position="44"/>
    </location>
</feature>
<feature type="compositionally biased region" description="Basic and acidic residues" evidence="6">
    <location>
        <begin position="28"/>
        <end position="39"/>
    </location>
</feature>
<feature type="modified residue" description="4-hydroxyproline" evidence="8">
    <location>
        <position position="57"/>
    </location>
</feature>
<feature type="modified residue" description="D-tryptophan" evidence="8">
    <location>
        <position position="58"/>
    </location>
</feature>
<feature type="modified residue" description="Cysteine amide" evidence="8">
    <location>
        <position position="62"/>
    </location>
</feature>
<feature type="disulfide bond" evidence="7 13 14">
    <location>
        <begin position="56"/>
        <end position="62"/>
    </location>
</feature>
<feature type="strand" evidence="15">
    <location>
        <begin position="57"/>
        <end position="59"/>
    </location>
</feature>
<reference key="1">
    <citation type="journal article" date="1998" name="J. Pept. Res.">
        <title>The contryphans, a D-tryptophan-containing family of Conus peptides: interconversion between conformers.</title>
        <authorList>
            <person name="Jacobsen R.B."/>
            <person name="Jimenez E.C."/>
            <person name="Grilley M."/>
            <person name="Watkins M."/>
            <person name="Hillyard D.R."/>
            <person name="Cruz L.J."/>
            <person name="Olivera B.M."/>
        </authorList>
    </citation>
    <scope>NUCLEOTIDE SEQUENCE [MRNA]</scope>
    <scope>PROTEIN SEQUENCE OF 55-62</scope>
    <scope>HYDROXYLATION AT PRO-57</scope>
    <scope>D-AMINO ACID AT TRP-58</scope>
    <scope>AMIDATION AT CYS-62</scope>
    <scope>SYNTHESIS OF 55-62</scope>
    <scope>MASS SPECTROMETRY</scope>
    <scope>SUBCELLULAR LOCATION</scope>
    <source>
        <tissue>Venom</tissue>
        <tissue>Venom duct</tissue>
    </source>
</reference>
<reference key="2">
    <citation type="journal article" date="2000" name="Biochemistry">
        <title>Structures of the contryphan family of cyclic peptides. Role of electrostatic interactions in cis-trans isomerism.</title>
        <authorList>
            <person name="Pallaghy P.K."/>
            <person name="He W."/>
            <person name="Jimenez E.C."/>
            <person name="Olivera B.M."/>
            <person name="Norton R.S."/>
        </authorList>
    </citation>
    <scope>STRUCTURE BY NMR OF 55-61 (MAJOR (CIS) AND MINOR (TRANS) CONFORMERS)</scope>
    <scope>DISULFIDE BONDS</scope>
    <scope>CIS-TRANS ISOMERIZATION</scope>
</reference>
<sequence length="63" mass="6859">MGKLTILVLVAAVLLSTQVMVQGDADQPADRDAVPRDDNPSGTDGKFMNVLRRFGCPWQPWCG</sequence>
<proteinExistence type="evidence at protein level"/>
<name>COW_CONSE</name>
<evidence type="ECO:0000250" key="1">
    <source>
        <dbReference type="UniProtKB" id="P0C248"/>
    </source>
</evidence>
<evidence type="ECO:0000250" key="2">
    <source>
        <dbReference type="UniProtKB" id="P0C250"/>
    </source>
</evidence>
<evidence type="ECO:0000250" key="3">
    <source>
        <dbReference type="UniProtKB" id="P62903"/>
    </source>
</evidence>
<evidence type="ECO:0000250" key="4">
    <source>
        <dbReference type="UniProtKB" id="P83047"/>
    </source>
</evidence>
<evidence type="ECO:0000255" key="5"/>
<evidence type="ECO:0000256" key="6">
    <source>
        <dbReference type="SAM" id="MobiDB-lite"/>
    </source>
</evidence>
<evidence type="ECO:0000269" key="7">
    <source>
    </source>
</evidence>
<evidence type="ECO:0000269" key="8">
    <source>
    </source>
</evidence>
<evidence type="ECO:0000303" key="9">
    <source>
    </source>
</evidence>
<evidence type="ECO:0000303" key="10">
    <source>
    </source>
</evidence>
<evidence type="ECO:0000305" key="11"/>
<evidence type="ECO:0000305" key="12">
    <source>
    </source>
</evidence>
<evidence type="ECO:0000312" key="13">
    <source>
        <dbReference type="PDB" id="1DFY"/>
    </source>
</evidence>
<evidence type="ECO:0000312" key="14">
    <source>
        <dbReference type="PDB" id="1DFZ"/>
    </source>
</evidence>
<evidence type="ECO:0007829" key="15">
    <source>
        <dbReference type="PDB" id="1DFY"/>
    </source>
</evidence>
<protein>
    <recommendedName>
        <fullName evidence="9 10">Contryphan-Sm</fullName>
    </recommendedName>
</protein>
<organism>
    <name type="scientific">Conus stercusmuscarum</name>
    <name type="common">Fly-specked cone</name>
    <dbReference type="NCBI Taxonomy" id="89452"/>
    <lineage>
        <taxon>Eukaryota</taxon>
        <taxon>Metazoa</taxon>
        <taxon>Spiralia</taxon>
        <taxon>Lophotrochozoa</taxon>
        <taxon>Mollusca</taxon>
        <taxon>Gastropoda</taxon>
        <taxon>Caenogastropoda</taxon>
        <taxon>Neogastropoda</taxon>
        <taxon>Conoidea</taxon>
        <taxon>Conidae</taxon>
        <taxon>Conus</taxon>
        <taxon>Pionoconus</taxon>
    </lineage>
</organism>